<feature type="chain" id="PRO_1000077575" description="NH(3)-dependent NAD(+) synthetase">
    <location>
        <begin position="1"/>
        <end position="263"/>
    </location>
</feature>
<feature type="binding site" evidence="1">
    <location>
        <begin position="29"/>
        <end position="36"/>
    </location>
    <ligand>
        <name>ATP</name>
        <dbReference type="ChEBI" id="CHEBI:30616"/>
    </ligand>
</feature>
<feature type="binding site" evidence="1">
    <location>
        <position position="35"/>
    </location>
    <ligand>
        <name>Mg(2+)</name>
        <dbReference type="ChEBI" id="CHEBI:18420"/>
    </ligand>
</feature>
<feature type="binding site" evidence="1">
    <location>
        <position position="114"/>
    </location>
    <ligand>
        <name>deamido-NAD(+)</name>
        <dbReference type="ChEBI" id="CHEBI:58437"/>
    </ligand>
</feature>
<feature type="binding site" evidence="1">
    <location>
        <position position="134"/>
    </location>
    <ligand>
        <name>ATP</name>
        <dbReference type="ChEBI" id="CHEBI:30616"/>
    </ligand>
</feature>
<feature type="binding site" evidence="1">
    <location>
        <position position="139"/>
    </location>
    <ligand>
        <name>Mg(2+)</name>
        <dbReference type="ChEBI" id="CHEBI:18420"/>
    </ligand>
</feature>
<feature type="binding site" evidence="1">
    <location>
        <position position="147"/>
    </location>
    <ligand>
        <name>deamido-NAD(+)</name>
        <dbReference type="ChEBI" id="CHEBI:58437"/>
    </ligand>
</feature>
<feature type="binding site" evidence="1">
    <location>
        <position position="154"/>
    </location>
    <ligand>
        <name>deamido-NAD(+)</name>
        <dbReference type="ChEBI" id="CHEBI:58437"/>
    </ligand>
</feature>
<feature type="binding site" evidence="1">
    <location>
        <position position="163"/>
    </location>
    <ligand>
        <name>ATP</name>
        <dbReference type="ChEBI" id="CHEBI:30616"/>
    </ligand>
</feature>
<feature type="binding site" evidence="1">
    <location>
        <position position="185"/>
    </location>
    <ligand>
        <name>ATP</name>
        <dbReference type="ChEBI" id="CHEBI:30616"/>
    </ligand>
</feature>
<feature type="binding site" evidence="1">
    <location>
        <begin position="244"/>
        <end position="245"/>
    </location>
    <ligand>
        <name>deamido-NAD(+)</name>
        <dbReference type="ChEBI" id="CHEBI:58437"/>
    </ligand>
</feature>
<organism>
    <name type="scientific">Methanococcoides burtonii (strain DSM 6242 / NBRC 107633 / OCM 468 / ACE-M)</name>
    <dbReference type="NCBI Taxonomy" id="259564"/>
    <lineage>
        <taxon>Archaea</taxon>
        <taxon>Methanobacteriati</taxon>
        <taxon>Methanobacteriota</taxon>
        <taxon>Stenosarchaea group</taxon>
        <taxon>Methanomicrobia</taxon>
        <taxon>Methanosarcinales</taxon>
        <taxon>Methanosarcinaceae</taxon>
        <taxon>Methanococcoides</taxon>
    </lineage>
</organism>
<comment type="function">
    <text evidence="1">Catalyzes the ATP-dependent amidation of deamido-NAD to form NAD. Uses ammonia as a nitrogen source.</text>
</comment>
<comment type="catalytic activity">
    <reaction evidence="1">
        <text>deamido-NAD(+) + NH4(+) + ATP = AMP + diphosphate + NAD(+) + H(+)</text>
        <dbReference type="Rhea" id="RHEA:21188"/>
        <dbReference type="ChEBI" id="CHEBI:15378"/>
        <dbReference type="ChEBI" id="CHEBI:28938"/>
        <dbReference type="ChEBI" id="CHEBI:30616"/>
        <dbReference type="ChEBI" id="CHEBI:33019"/>
        <dbReference type="ChEBI" id="CHEBI:57540"/>
        <dbReference type="ChEBI" id="CHEBI:58437"/>
        <dbReference type="ChEBI" id="CHEBI:456215"/>
        <dbReference type="EC" id="6.3.1.5"/>
    </reaction>
</comment>
<comment type="pathway">
    <text evidence="1">Cofactor biosynthesis; NAD(+) biosynthesis; NAD(+) from deamido-NAD(+) (ammonia route): step 1/1.</text>
</comment>
<comment type="subunit">
    <text evidence="1">Homodimer.</text>
</comment>
<comment type="similarity">
    <text evidence="1">Belongs to the NAD synthetase family.</text>
</comment>
<keyword id="KW-0067">ATP-binding</keyword>
<keyword id="KW-0436">Ligase</keyword>
<keyword id="KW-0460">Magnesium</keyword>
<keyword id="KW-0479">Metal-binding</keyword>
<keyword id="KW-0520">NAD</keyword>
<keyword id="KW-0547">Nucleotide-binding</keyword>
<sequence>MDIIQAKDIIIDFIGTKLEGTGIEGAVVGISGGIDSALVAYLSVEALGAENVLGIHMPEASTPKSEIEDASKVAEALGIDFKVINITNVLEVYRTAMPDIDGASAHVDGNLKARIRMSMLYYYANMFGRVVMGTGNKSEILLGYFTKYGDGGVDIEPIGDLYKTEVREMSKMLGVPESILEKAPSAGLWEGQTDEDDLGVTYETIDKVLQPILAGEGQERVHLKLGVPMEEISSILLRVRSNLHKRTTPQIAYLDDLRGDWLS</sequence>
<evidence type="ECO:0000255" key="1">
    <source>
        <dbReference type="HAMAP-Rule" id="MF_00193"/>
    </source>
</evidence>
<reference key="1">
    <citation type="journal article" date="2009" name="ISME J.">
        <title>The genome sequence of the psychrophilic archaeon, Methanococcoides burtonii: the role of genome evolution in cold adaptation.</title>
        <authorList>
            <person name="Allen M.A."/>
            <person name="Lauro F.M."/>
            <person name="Williams T.J."/>
            <person name="Burg D."/>
            <person name="Siddiqui K.S."/>
            <person name="De Francisci D."/>
            <person name="Chong K.W."/>
            <person name="Pilak O."/>
            <person name="Chew H.H."/>
            <person name="De Maere M.Z."/>
            <person name="Ting L."/>
            <person name="Katrib M."/>
            <person name="Ng C."/>
            <person name="Sowers K.R."/>
            <person name="Galperin M.Y."/>
            <person name="Anderson I.J."/>
            <person name="Ivanova N."/>
            <person name="Dalin E."/>
            <person name="Martinez M."/>
            <person name="Lapidus A."/>
            <person name="Hauser L."/>
            <person name="Land M."/>
            <person name="Thomas T."/>
            <person name="Cavicchioli R."/>
        </authorList>
    </citation>
    <scope>NUCLEOTIDE SEQUENCE [LARGE SCALE GENOMIC DNA]</scope>
    <source>
        <strain>DSM 6242 / NBRC 107633 / OCM 468 / ACE-M</strain>
    </source>
</reference>
<proteinExistence type="inferred from homology"/>
<dbReference type="EC" id="6.3.1.5" evidence="1"/>
<dbReference type="EMBL" id="CP000300">
    <property type="protein sequence ID" value="ABE52695.1"/>
    <property type="molecule type" value="Genomic_DNA"/>
</dbReference>
<dbReference type="RefSeq" id="WP_011499838.1">
    <property type="nucleotide sequence ID" value="NC_007955.1"/>
</dbReference>
<dbReference type="SMR" id="Q12V31"/>
<dbReference type="STRING" id="259564.Mbur_1809"/>
<dbReference type="GeneID" id="3997936"/>
<dbReference type="KEGG" id="mbu:Mbur_1809"/>
<dbReference type="HOGENOM" id="CLU_059327_1_1_2"/>
<dbReference type="OrthoDB" id="39312at2157"/>
<dbReference type="UniPathway" id="UPA00253">
    <property type="reaction ID" value="UER00333"/>
</dbReference>
<dbReference type="Proteomes" id="UP000001979">
    <property type="component" value="Chromosome"/>
</dbReference>
<dbReference type="GO" id="GO:0005737">
    <property type="term" value="C:cytoplasm"/>
    <property type="evidence" value="ECO:0007669"/>
    <property type="project" value="InterPro"/>
</dbReference>
<dbReference type="GO" id="GO:0005524">
    <property type="term" value="F:ATP binding"/>
    <property type="evidence" value="ECO:0007669"/>
    <property type="project" value="UniProtKB-UniRule"/>
</dbReference>
<dbReference type="GO" id="GO:0004359">
    <property type="term" value="F:glutaminase activity"/>
    <property type="evidence" value="ECO:0007669"/>
    <property type="project" value="InterPro"/>
</dbReference>
<dbReference type="GO" id="GO:0046872">
    <property type="term" value="F:metal ion binding"/>
    <property type="evidence" value="ECO:0007669"/>
    <property type="project" value="UniProtKB-KW"/>
</dbReference>
<dbReference type="GO" id="GO:0003952">
    <property type="term" value="F:NAD+ synthase (glutamine-hydrolyzing) activity"/>
    <property type="evidence" value="ECO:0007669"/>
    <property type="project" value="InterPro"/>
</dbReference>
<dbReference type="GO" id="GO:0008795">
    <property type="term" value="F:NAD+ synthase activity"/>
    <property type="evidence" value="ECO:0007669"/>
    <property type="project" value="UniProtKB-UniRule"/>
</dbReference>
<dbReference type="GO" id="GO:0009435">
    <property type="term" value="P:NAD biosynthetic process"/>
    <property type="evidence" value="ECO:0007669"/>
    <property type="project" value="UniProtKB-UniRule"/>
</dbReference>
<dbReference type="CDD" id="cd00553">
    <property type="entry name" value="NAD_synthase"/>
    <property type="match status" value="1"/>
</dbReference>
<dbReference type="FunFam" id="3.40.50.620:FF:000106">
    <property type="entry name" value="Glutamine-dependent NAD(+) synthetase"/>
    <property type="match status" value="1"/>
</dbReference>
<dbReference type="Gene3D" id="3.40.50.620">
    <property type="entry name" value="HUPs"/>
    <property type="match status" value="1"/>
</dbReference>
<dbReference type="HAMAP" id="MF_00193">
    <property type="entry name" value="NadE_ammonia_dep"/>
    <property type="match status" value="1"/>
</dbReference>
<dbReference type="InterPro" id="IPR022310">
    <property type="entry name" value="NAD/GMP_synthase"/>
</dbReference>
<dbReference type="InterPro" id="IPR003694">
    <property type="entry name" value="NAD_synthase"/>
</dbReference>
<dbReference type="InterPro" id="IPR022926">
    <property type="entry name" value="NH(3)-dep_NAD(+)_synth"/>
</dbReference>
<dbReference type="InterPro" id="IPR014729">
    <property type="entry name" value="Rossmann-like_a/b/a_fold"/>
</dbReference>
<dbReference type="NCBIfam" id="TIGR00552">
    <property type="entry name" value="nadE"/>
    <property type="match status" value="1"/>
</dbReference>
<dbReference type="NCBIfam" id="NF010587">
    <property type="entry name" value="PRK13980.1"/>
    <property type="match status" value="1"/>
</dbReference>
<dbReference type="PANTHER" id="PTHR23090:SF9">
    <property type="entry name" value="GLUTAMINE-DEPENDENT NAD(+) SYNTHETASE"/>
    <property type="match status" value="1"/>
</dbReference>
<dbReference type="PANTHER" id="PTHR23090">
    <property type="entry name" value="NH 3 /GLUTAMINE-DEPENDENT NAD + SYNTHETASE"/>
    <property type="match status" value="1"/>
</dbReference>
<dbReference type="Pfam" id="PF02540">
    <property type="entry name" value="NAD_synthase"/>
    <property type="match status" value="1"/>
</dbReference>
<dbReference type="SUPFAM" id="SSF52402">
    <property type="entry name" value="Adenine nucleotide alpha hydrolases-like"/>
    <property type="match status" value="1"/>
</dbReference>
<protein>
    <recommendedName>
        <fullName evidence="1">NH(3)-dependent NAD(+) synthetase</fullName>
        <ecNumber evidence="1">6.3.1.5</ecNumber>
    </recommendedName>
</protein>
<accession>Q12V31</accession>
<name>NADE_METBU</name>
<gene>
    <name evidence="1" type="primary">nadE</name>
    <name type="ordered locus">Mbur_1809</name>
</gene>